<gene>
    <name evidence="1" type="primary">aroQ</name>
    <name type="ordered locus">MLBr00519</name>
</gene>
<comment type="function">
    <text evidence="1">Catalyzes a trans-dehydration via an enolate intermediate.</text>
</comment>
<comment type="catalytic activity">
    <reaction evidence="1">
        <text>3-dehydroquinate = 3-dehydroshikimate + H2O</text>
        <dbReference type="Rhea" id="RHEA:21096"/>
        <dbReference type="ChEBI" id="CHEBI:15377"/>
        <dbReference type="ChEBI" id="CHEBI:16630"/>
        <dbReference type="ChEBI" id="CHEBI:32364"/>
        <dbReference type="EC" id="4.2.1.10"/>
    </reaction>
</comment>
<comment type="pathway">
    <text evidence="1">Metabolic intermediate biosynthesis; chorismate biosynthesis; chorismate from D-erythrose 4-phosphate and phosphoenolpyruvate: step 3/7.</text>
</comment>
<comment type="subunit">
    <text evidence="1">Homododecamer.</text>
</comment>
<comment type="similarity">
    <text evidence="1">Belongs to the type-II 3-dehydroquinase family.</text>
</comment>
<feature type="chain" id="PRO_1000123695" description="3-dehydroquinate dehydratase">
    <location>
        <begin position="1"/>
        <end position="145"/>
    </location>
</feature>
<feature type="active site" description="Proton acceptor" evidence="1">
    <location>
        <position position="23"/>
    </location>
</feature>
<feature type="active site" description="Proton donor" evidence="1">
    <location>
        <position position="100"/>
    </location>
</feature>
<feature type="binding site" evidence="1">
    <location>
        <position position="74"/>
    </location>
    <ligand>
        <name>substrate</name>
    </ligand>
</feature>
<feature type="binding site" evidence="1">
    <location>
        <position position="80"/>
    </location>
    <ligand>
        <name>substrate</name>
    </ligand>
</feature>
<feature type="binding site" evidence="1">
    <location>
        <position position="87"/>
    </location>
    <ligand>
        <name>substrate</name>
    </ligand>
</feature>
<feature type="binding site" evidence="1">
    <location>
        <begin position="101"/>
        <end position="102"/>
    </location>
    <ligand>
        <name>substrate</name>
    </ligand>
</feature>
<feature type="binding site" evidence="1">
    <location>
        <position position="111"/>
    </location>
    <ligand>
        <name>substrate</name>
    </ligand>
</feature>
<feature type="site" description="Transition state stabilizer" evidence="1">
    <location>
        <position position="18"/>
    </location>
</feature>
<protein>
    <recommendedName>
        <fullName evidence="1">3-dehydroquinate dehydratase</fullName>
        <shortName evidence="1">3-dehydroquinase</shortName>
        <ecNumber evidence="1">4.2.1.10</ecNumber>
    </recommendedName>
    <alternativeName>
        <fullName evidence="1">Type II DHQase</fullName>
    </alternativeName>
</protein>
<accession>B8ZUK3</accession>
<keyword id="KW-0028">Amino-acid biosynthesis</keyword>
<keyword id="KW-0057">Aromatic amino acid biosynthesis</keyword>
<keyword id="KW-0456">Lyase</keyword>
<evidence type="ECO:0000255" key="1">
    <source>
        <dbReference type="HAMAP-Rule" id="MF_00169"/>
    </source>
</evidence>
<reference key="1">
    <citation type="journal article" date="2009" name="Nat. Genet.">
        <title>Comparative genomic and phylogeographic analysis of Mycobacterium leprae.</title>
        <authorList>
            <person name="Monot M."/>
            <person name="Honore N."/>
            <person name="Garnier T."/>
            <person name="Zidane N."/>
            <person name="Sherafi D."/>
            <person name="Paniz-Mondolfi A."/>
            <person name="Matsuoka M."/>
            <person name="Taylor G.M."/>
            <person name="Donoghue H.D."/>
            <person name="Bouwman A."/>
            <person name="Mays S."/>
            <person name="Watson C."/>
            <person name="Lockwood D."/>
            <person name="Khamispour A."/>
            <person name="Dowlati Y."/>
            <person name="Jianping S."/>
            <person name="Rea T.H."/>
            <person name="Vera-Cabrera L."/>
            <person name="Stefani M.M."/>
            <person name="Banu S."/>
            <person name="Macdonald M."/>
            <person name="Sapkota B.R."/>
            <person name="Spencer J.S."/>
            <person name="Thomas J."/>
            <person name="Harshman K."/>
            <person name="Singh P."/>
            <person name="Busso P."/>
            <person name="Gattiker A."/>
            <person name="Rougemont J."/>
            <person name="Brennan P.J."/>
            <person name="Cole S.T."/>
        </authorList>
    </citation>
    <scope>NUCLEOTIDE SEQUENCE [LARGE SCALE GENOMIC DNA]</scope>
    <source>
        <strain>Br4923</strain>
    </source>
</reference>
<proteinExistence type="inferred from homology"/>
<organism>
    <name type="scientific">Mycobacterium leprae (strain Br4923)</name>
    <dbReference type="NCBI Taxonomy" id="561304"/>
    <lineage>
        <taxon>Bacteria</taxon>
        <taxon>Bacillati</taxon>
        <taxon>Actinomycetota</taxon>
        <taxon>Actinomycetes</taxon>
        <taxon>Mycobacteriales</taxon>
        <taxon>Mycobacteriaceae</taxon>
        <taxon>Mycobacterium</taxon>
    </lineage>
</organism>
<dbReference type="EC" id="4.2.1.10" evidence="1"/>
<dbReference type="EMBL" id="FM211192">
    <property type="protein sequence ID" value="CAR70612.1"/>
    <property type="molecule type" value="Genomic_DNA"/>
</dbReference>
<dbReference type="SMR" id="B8ZUK3"/>
<dbReference type="KEGG" id="mlb:MLBr00519"/>
<dbReference type="HOGENOM" id="CLU_090968_2_1_11"/>
<dbReference type="UniPathway" id="UPA00053">
    <property type="reaction ID" value="UER00086"/>
</dbReference>
<dbReference type="Proteomes" id="UP000006900">
    <property type="component" value="Chromosome"/>
</dbReference>
<dbReference type="GO" id="GO:0003855">
    <property type="term" value="F:3-dehydroquinate dehydratase activity"/>
    <property type="evidence" value="ECO:0007669"/>
    <property type="project" value="UniProtKB-UniRule"/>
</dbReference>
<dbReference type="GO" id="GO:0008652">
    <property type="term" value="P:amino acid biosynthetic process"/>
    <property type="evidence" value="ECO:0007669"/>
    <property type="project" value="UniProtKB-KW"/>
</dbReference>
<dbReference type="GO" id="GO:0009073">
    <property type="term" value="P:aromatic amino acid family biosynthetic process"/>
    <property type="evidence" value="ECO:0007669"/>
    <property type="project" value="UniProtKB-KW"/>
</dbReference>
<dbReference type="GO" id="GO:0009423">
    <property type="term" value="P:chorismate biosynthetic process"/>
    <property type="evidence" value="ECO:0007669"/>
    <property type="project" value="UniProtKB-UniRule"/>
</dbReference>
<dbReference type="GO" id="GO:0019631">
    <property type="term" value="P:quinate catabolic process"/>
    <property type="evidence" value="ECO:0007669"/>
    <property type="project" value="TreeGrafter"/>
</dbReference>
<dbReference type="CDD" id="cd00466">
    <property type="entry name" value="DHQase_II"/>
    <property type="match status" value="1"/>
</dbReference>
<dbReference type="FunFam" id="3.40.50.9100:FF:000001">
    <property type="entry name" value="3-dehydroquinate dehydratase"/>
    <property type="match status" value="1"/>
</dbReference>
<dbReference type="Gene3D" id="3.40.50.9100">
    <property type="entry name" value="Dehydroquinase, class II"/>
    <property type="match status" value="1"/>
</dbReference>
<dbReference type="HAMAP" id="MF_00169">
    <property type="entry name" value="AroQ"/>
    <property type="match status" value="1"/>
</dbReference>
<dbReference type="InterPro" id="IPR001874">
    <property type="entry name" value="DHquinase_II"/>
</dbReference>
<dbReference type="InterPro" id="IPR018509">
    <property type="entry name" value="DHquinase_II_CS"/>
</dbReference>
<dbReference type="InterPro" id="IPR036441">
    <property type="entry name" value="DHquinase_II_sf"/>
</dbReference>
<dbReference type="NCBIfam" id="TIGR01088">
    <property type="entry name" value="aroQ"/>
    <property type="match status" value="1"/>
</dbReference>
<dbReference type="NCBIfam" id="NF003805">
    <property type="entry name" value="PRK05395.1-2"/>
    <property type="match status" value="1"/>
</dbReference>
<dbReference type="NCBIfam" id="NF003806">
    <property type="entry name" value="PRK05395.1-3"/>
    <property type="match status" value="1"/>
</dbReference>
<dbReference type="NCBIfam" id="NF003807">
    <property type="entry name" value="PRK05395.1-4"/>
    <property type="match status" value="1"/>
</dbReference>
<dbReference type="PANTHER" id="PTHR21272">
    <property type="entry name" value="CATABOLIC 3-DEHYDROQUINASE"/>
    <property type="match status" value="1"/>
</dbReference>
<dbReference type="PANTHER" id="PTHR21272:SF3">
    <property type="entry name" value="CATABOLIC 3-DEHYDROQUINASE"/>
    <property type="match status" value="1"/>
</dbReference>
<dbReference type="Pfam" id="PF01220">
    <property type="entry name" value="DHquinase_II"/>
    <property type="match status" value="1"/>
</dbReference>
<dbReference type="PIRSF" id="PIRSF001399">
    <property type="entry name" value="DHquinase_II"/>
    <property type="match status" value="1"/>
</dbReference>
<dbReference type="SUPFAM" id="SSF52304">
    <property type="entry name" value="Type II 3-dehydroquinate dehydratase"/>
    <property type="match status" value="1"/>
</dbReference>
<dbReference type="PROSITE" id="PS01029">
    <property type="entry name" value="DEHYDROQUINASE_II"/>
    <property type="match status" value="1"/>
</dbReference>
<name>AROQ_MYCLB</name>
<sequence>MTMVNIINGPNLGRLGRREPDVYGSTTHEQLSALIERAAVEFGIKAVVRQSDSESQLLDWIHLAADAGEPVILNAGGLTHTSVALRDACAELSAPFIEVHISNVHAREEFRRHSYLSPLATGVITGLGVQGYLLALRYLAEIAGN</sequence>